<evidence type="ECO:0000255" key="1">
    <source>
        <dbReference type="HAMAP-Rule" id="MF_01416"/>
    </source>
</evidence>
<evidence type="ECO:0000305" key="2"/>
<protein>
    <recommendedName>
        <fullName evidence="1">ATP synthase subunit delta</fullName>
    </recommendedName>
    <alternativeName>
        <fullName evidence="1">ATP synthase F(1) sector subunit delta</fullName>
    </alternativeName>
    <alternativeName>
        <fullName evidence="1">F-type ATPase subunit delta</fullName>
        <shortName evidence="1">F-ATPase subunit delta</shortName>
    </alternativeName>
</protein>
<proteinExistence type="inferred from homology"/>
<dbReference type="EMBL" id="AE014184">
    <property type="protein sequence ID" value="AAO44524.1"/>
    <property type="status" value="ALT_INIT"/>
    <property type="molecule type" value="Genomic_DNA"/>
</dbReference>
<dbReference type="RefSeq" id="WP_011096293.1">
    <property type="nucleotide sequence ID" value="NC_004572.3"/>
</dbReference>
<dbReference type="SMR" id="Q83G88"/>
<dbReference type="STRING" id="203267.TWT_427"/>
<dbReference type="KEGG" id="twh:TWT_427"/>
<dbReference type="eggNOG" id="COG0712">
    <property type="taxonomic scope" value="Bacteria"/>
</dbReference>
<dbReference type="HOGENOM" id="CLU_1061480_0_0_11"/>
<dbReference type="OrthoDB" id="5242917at2"/>
<dbReference type="Proteomes" id="UP000002200">
    <property type="component" value="Chromosome"/>
</dbReference>
<dbReference type="GO" id="GO:0005886">
    <property type="term" value="C:plasma membrane"/>
    <property type="evidence" value="ECO:0007669"/>
    <property type="project" value="UniProtKB-SubCell"/>
</dbReference>
<dbReference type="GO" id="GO:0045259">
    <property type="term" value="C:proton-transporting ATP synthase complex"/>
    <property type="evidence" value="ECO:0007669"/>
    <property type="project" value="UniProtKB-KW"/>
</dbReference>
<dbReference type="GO" id="GO:0046933">
    <property type="term" value="F:proton-transporting ATP synthase activity, rotational mechanism"/>
    <property type="evidence" value="ECO:0007669"/>
    <property type="project" value="UniProtKB-UniRule"/>
</dbReference>
<dbReference type="HAMAP" id="MF_01416">
    <property type="entry name" value="ATP_synth_delta_bact"/>
    <property type="match status" value="1"/>
</dbReference>
<dbReference type="InterPro" id="IPR020781">
    <property type="entry name" value="ATPase_OSCP/d_CS"/>
</dbReference>
<dbReference type="InterPro" id="IPR000711">
    <property type="entry name" value="ATPase_OSCP/dsu"/>
</dbReference>
<dbReference type="Pfam" id="PF00213">
    <property type="entry name" value="OSCP"/>
    <property type="match status" value="1"/>
</dbReference>
<dbReference type="PROSITE" id="PS00389">
    <property type="entry name" value="ATPASE_DELTA"/>
    <property type="match status" value="1"/>
</dbReference>
<keyword id="KW-0066">ATP synthesis</keyword>
<keyword id="KW-1003">Cell membrane</keyword>
<keyword id="KW-0139">CF(1)</keyword>
<keyword id="KW-0375">Hydrogen ion transport</keyword>
<keyword id="KW-0406">Ion transport</keyword>
<keyword id="KW-0472">Membrane</keyword>
<keyword id="KW-1185">Reference proteome</keyword>
<keyword id="KW-0813">Transport</keyword>
<reference key="1">
    <citation type="journal article" date="2003" name="Genome Res.">
        <title>Tropheryma whipplei twist: a human pathogenic Actinobacteria with a reduced genome.</title>
        <authorList>
            <person name="Raoult D."/>
            <person name="Ogata H."/>
            <person name="Audic S."/>
            <person name="Robert C."/>
            <person name="Suhre K."/>
            <person name="Drancourt M."/>
            <person name="Claverie J.-M."/>
        </authorList>
    </citation>
    <scope>NUCLEOTIDE SEQUENCE [LARGE SCALE GENOMIC DNA]</scope>
    <source>
        <strain>Twist</strain>
    </source>
</reference>
<sequence length="262" mass="29652">MPGSSSRSSLAHLRNRLSECSDLQSLYEVAVLLAISRRLRSSLVSRSLSCVSKQKLIAELTGKDPDAFICMAVSLRWSEPIDLLYAFEEMFIRASCTRRFADCRDFLDELFWVSSIVDSHKILDKTLSARFLPAYSKKQLISGVFAGAHEGTLAVLEYFACYMQKKRAFRECVFFAEKIVADELGAQIADVTTERPLSREQRDELVDVLSRRFKRRIILREVINEKVFGGVRVQVNHSVIDDTVAVHLNNLALSFGALETFS</sequence>
<name>ATPD_TROWT</name>
<accession>Q83G88</accession>
<gene>
    <name evidence="1" type="primary">atpH</name>
    <name type="synonym">twt427</name>
    <name type="ordered locus">TWT_427</name>
</gene>
<comment type="function">
    <text evidence="1">F(1)F(0) ATP synthase produces ATP from ADP in the presence of a proton or sodium gradient. F-type ATPases consist of two structural domains, F(1) containing the extramembraneous catalytic core and F(0) containing the membrane proton channel, linked together by a central stalk and a peripheral stalk. During catalysis, ATP synthesis in the catalytic domain of F(1) is coupled via a rotary mechanism of the central stalk subunits to proton translocation.</text>
</comment>
<comment type="function">
    <text evidence="1">This protein is part of the stalk that links CF(0) to CF(1). It either transmits conformational changes from CF(0) to CF(1) or is implicated in proton conduction.</text>
</comment>
<comment type="subunit">
    <text evidence="1">F-type ATPases have 2 components, F(1) - the catalytic core - and F(0) - the membrane proton channel. F(1) has five subunits: alpha(3), beta(3), gamma(1), delta(1), epsilon(1). F(0) has three main subunits: a(1), b(2) and c(10-14). The alpha and beta chains form an alternating ring which encloses part of the gamma chain. F(1) is attached to F(0) by a central stalk formed by the gamma and epsilon chains, while a peripheral stalk is formed by the delta and b chains.</text>
</comment>
<comment type="subcellular location">
    <subcellularLocation>
        <location evidence="1">Cell membrane</location>
        <topology evidence="1">Peripheral membrane protein</topology>
    </subcellularLocation>
</comment>
<comment type="similarity">
    <text evidence="1">Belongs to the ATPase delta chain family.</text>
</comment>
<comment type="sequence caution" evidence="2">
    <conflict type="erroneous initiation">
        <sequence resource="EMBL-CDS" id="AAO44524"/>
    </conflict>
</comment>
<organism>
    <name type="scientific">Tropheryma whipplei (strain Twist)</name>
    <name type="common">Whipple's bacillus</name>
    <dbReference type="NCBI Taxonomy" id="203267"/>
    <lineage>
        <taxon>Bacteria</taxon>
        <taxon>Bacillati</taxon>
        <taxon>Actinomycetota</taxon>
        <taxon>Actinomycetes</taxon>
        <taxon>Micrococcales</taxon>
        <taxon>Tropherymataceae</taxon>
        <taxon>Tropheryma</taxon>
    </lineage>
</organism>
<feature type="chain" id="PRO_0000382166" description="ATP synthase subunit delta">
    <location>
        <begin position="1"/>
        <end position="262"/>
    </location>
</feature>